<name>NORV_KLEP7</name>
<reference key="1">
    <citation type="submission" date="2006-09" db="EMBL/GenBank/DDBJ databases">
        <authorList>
            <consortium name="The Klebsiella pneumonia Genome Sequencing Project"/>
            <person name="McClelland M."/>
            <person name="Sanderson E.K."/>
            <person name="Spieth J."/>
            <person name="Clifton W.S."/>
            <person name="Latreille P."/>
            <person name="Sabo A."/>
            <person name="Pepin K."/>
            <person name="Bhonagiri V."/>
            <person name="Porwollik S."/>
            <person name="Ali J."/>
            <person name="Wilson R.K."/>
        </authorList>
    </citation>
    <scope>NUCLEOTIDE SEQUENCE [LARGE SCALE GENOMIC DNA]</scope>
    <source>
        <strain>ATCC 700721 / MGH 78578</strain>
    </source>
</reference>
<keyword id="KW-0963">Cytoplasm</keyword>
<keyword id="KW-0249">Electron transport</keyword>
<keyword id="KW-0285">Flavoprotein</keyword>
<keyword id="KW-0288">FMN</keyword>
<keyword id="KW-0408">Iron</keyword>
<keyword id="KW-0479">Metal-binding</keyword>
<keyword id="KW-0560">Oxidoreductase</keyword>
<keyword id="KW-0813">Transport</keyword>
<comment type="function">
    <text evidence="1">Anaerobic nitric oxide reductase; uses NADH to detoxify nitric oxide (NO), protecting several 4Fe-4S NO-sensitive enzymes. Has at least 2 reductase partners, only one of which (NorW, flavorubredoxin reductase) has been identified. NO probably binds to the di-iron center; electrons enter from the NorW at rubredoxin and are transferred sequentially to the FMN center and the di-iron center. Also able to function as an aerobic oxygen reductase.</text>
</comment>
<comment type="cofactor">
    <cofactor evidence="1">
        <name>Fe cation</name>
        <dbReference type="ChEBI" id="CHEBI:24875"/>
    </cofactor>
    <text evidence="1">Binds 3 Fe cations per monomer.</text>
</comment>
<comment type="cofactor">
    <cofactor evidence="1">
        <name>FMN</name>
        <dbReference type="ChEBI" id="CHEBI:58210"/>
    </cofactor>
    <text evidence="1">Binds 1 FMN per monomer.</text>
</comment>
<comment type="pathway">
    <text evidence="1">Nitrogen metabolism; nitric oxide reduction.</text>
</comment>
<comment type="subunit">
    <text evidence="1">Homotetramer.</text>
</comment>
<comment type="subcellular location">
    <subcellularLocation>
        <location evidence="1">Cytoplasm</location>
    </subcellularLocation>
</comment>
<comment type="similarity">
    <text evidence="1">In the N-terminal section; belongs to the zinc metallo-hydrolase group 3 family.</text>
</comment>
<evidence type="ECO:0000255" key="1">
    <source>
        <dbReference type="HAMAP-Rule" id="MF_01312"/>
    </source>
</evidence>
<accession>A6TCX5</accession>
<sequence length="482" mass="54390">MSIVVKNNILWVGQRDWEVRDFHGTEYKTLRGSSYNSYLIREEKNVLIDTVDHKFSREFVQNLRREIDLADLDYIVINHAEEDHAGALTELMMQIPDTPIYCTANAIDSINGHHHHPEWNFHVVKTGDTLDIGNGKQLIFVETPMLHWPDSMMTYLTGDAVLFSNDAFGQHYCDEHLFNDEVDQTELYEQCQRYYANILTPFSRLVTPKITEILGFNLPVEMIATSHGVVWRDNPTQIVEKYLEWAADYQEDRITIFYDTMSNNTRMMADAIAQGITEVDPQVAVKIFNVARSDKNDILTNVFRSKGVLVGTSTMNNVMMPKIAGLVEEMTGLRFRNKRASAFGSHGWSGGAVDRLSTRLQDAGFEMSLSLKAKWRPDIDALELCRQHGRDIARQWALSPLPVAEAATTPEPQDCACAAAAAADLGPMMQCSVCQWVYDPAKGEPNQDVQPGTPWSEVPDNFLCPECSLGKDVFDVLATEAK</sequence>
<gene>
    <name evidence="1" type="primary">norV</name>
    <name evidence="1" type="synonym">flrD</name>
    <name type="ordered locus">KPN78578_29850</name>
    <name type="ORF">KPN_03045</name>
</gene>
<proteinExistence type="inferred from homology"/>
<organism>
    <name type="scientific">Klebsiella pneumoniae subsp. pneumoniae (strain ATCC 700721 / MGH 78578)</name>
    <dbReference type="NCBI Taxonomy" id="272620"/>
    <lineage>
        <taxon>Bacteria</taxon>
        <taxon>Pseudomonadati</taxon>
        <taxon>Pseudomonadota</taxon>
        <taxon>Gammaproteobacteria</taxon>
        <taxon>Enterobacterales</taxon>
        <taxon>Enterobacteriaceae</taxon>
        <taxon>Klebsiella/Raoultella group</taxon>
        <taxon>Klebsiella</taxon>
        <taxon>Klebsiella pneumoniae complex</taxon>
    </lineage>
</organism>
<feature type="chain" id="PRO_0000341310" description="Anaerobic nitric oxide reductase flavorubredoxin">
    <location>
        <begin position="1"/>
        <end position="482"/>
    </location>
</feature>
<feature type="domain" description="Flavodoxin-like" evidence="1">
    <location>
        <begin position="254"/>
        <end position="393"/>
    </location>
</feature>
<feature type="domain" description="Rubredoxin-like" evidence="1">
    <location>
        <begin position="426"/>
        <end position="477"/>
    </location>
</feature>
<feature type="region of interest" description="Zinc metallo-hydrolase">
    <location>
        <begin position="30"/>
        <end position="210"/>
    </location>
</feature>
<feature type="binding site" evidence="1">
    <location>
        <position position="79"/>
    </location>
    <ligand>
        <name>Fe cation</name>
        <dbReference type="ChEBI" id="CHEBI:24875"/>
        <label>1</label>
    </ligand>
</feature>
<feature type="binding site" evidence="1">
    <location>
        <position position="81"/>
    </location>
    <ligand>
        <name>Fe cation</name>
        <dbReference type="ChEBI" id="CHEBI:24875"/>
        <label>1</label>
    </ligand>
</feature>
<feature type="binding site" evidence="1">
    <location>
        <position position="83"/>
    </location>
    <ligand>
        <name>Fe cation</name>
        <dbReference type="ChEBI" id="CHEBI:24875"/>
        <label>2</label>
    </ligand>
</feature>
<feature type="binding site" evidence="1">
    <location>
        <position position="147"/>
    </location>
    <ligand>
        <name>Fe cation</name>
        <dbReference type="ChEBI" id="CHEBI:24875"/>
        <label>1</label>
    </ligand>
</feature>
<feature type="binding site" evidence="1">
    <location>
        <position position="166"/>
    </location>
    <ligand>
        <name>Fe cation</name>
        <dbReference type="ChEBI" id="CHEBI:24875"/>
        <label>1</label>
    </ligand>
</feature>
<feature type="binding site" evidence="1">
    <location>
        <position position="166"/>
    </location>
    <ligand>
        <name>Fe cation</name>
        <dbReference type="ChEBI" id="CHEBI:24875"/>
        <label>2</label>
    </ligand>
</feature>
<feature type="binding site" evidence="1">
    <location>
        <position position="227"/>
    </location>
    <ligand>
        <name>Fe cation</name>
        <dbReference type="ChEBI" id="CHEBI:24875"/>
        <label>2</label>
    </ligand>
</feature>
<feature type="binding site" evidence="1">
    <location>
        <begin position="260"/>
        <end position="264"/>
    </location>
    <ligand>
        <name>FMN</name>
        <dbReference type="ChEBI" id="CHEBI:58210"/>
    </ligand>
</feature>
<feature type="binding site" evidence="1">
    <location>
        <begin position="342"/>
        <end position="369"/>
    </location>
    <ligand>
        <name>FMN</name>
        <dbReference type="ChEBI" id="CHEBI:58210"/>
    </ligand>
</feature>
<feature type="binding site" evidence="1">
    <location>
        <position position="431"/>
    </location>
    <ligand>
        <name>Fe cation</name>
        <dbReference type="ChEBI" id="CHEBI:24875"/>
        <label>3</label>
    </ligand>
</feature>
<feature type="binding site" evidence="1">
    <location>
        <position position="434"/>
    </location>
    <ligand>
        <name>Fe cation</name>
        <dbReference type="ChEBI" id="CHEBI:24875"/>
        <label>3</label>
    </ligand>
</feature>
<feature type="binding site" evidence="1">
    <location>
        <position position="464"/>
    </location>
    <ligand>
        <name>Fe cation</name>
        <dbReference type="ChEBI" id="CHEBI:24875"/>
        <label>3</label>
    </ligand>
</feature>
<feature type="binding site" evidence="1">
    <location>
        <position position="467"/>
    </location>
    <ligand>
        <name>Fe cation</name>
        <dbReference type="ChEBI" id="CHEBI:24875"/>
        <label>3</label>
    </ligand>
</feature>
<dbReference type="EMBL" id="CP000647">
    <property type="protein sequence ID" value="ABR78446.1"/>
    <property type="molecule type" value="Genomic_DNA"/>
</dbReference>
<dbReference type="RefSeq" id="WP_015958870.1">
    <property type="nucleotide sequence ID" value="NC_009648.1"/>
</dbReference>
<dbReference type="SMR" id="A6TCX5"/>
<dbReference type="STRING" id="272620.KPN_03045"/>
<dbReference type="PaxDb" id="272620-KPN_03045"/>
<dbReference type="EnsemblBacteria" id="ABR78446">
    <property type="protein sequence ID" value="ABR78446"/>
    <property type="gene ID" value="KPN_03045"/>
</dbReference>
<dbReference type="KEGG" id="kpn:KPN_03045"/>
<dbReference type="HOGENOM" id="CLU_017490_0_1_6"/>
<dbReference type="UniPathway" id="UPA00638"/>
<dbReference type="Proteomes" id="UP000000265">
    <property type="component" value="Chromosome"/>
</dbReference>
<dbReference type="GO" id="GO:0005737">
    <property type="term" value="C:cytoplasm"/>
    <property type="evidence" value="ECO:0007669"/>
    <property type="project" value="UniProtKB-SubCell"/>
</dbReference>
<dbReference type="GO" id="GO:0009055">
    <property type="term" value="F:electron transfer activity"/>
    <property type="evidence" value="ECO:0007669"/>
    <property type="project" value="UniProtKB-UniRule"/>
</dbReference>
<dbReference type="GO" id="GO:0010181">
    <property type="term" value="F:FMN binding"/>
    <property type="evidence" value="ECO:0007669"/>
    <property type="project" value="InterPro"/>
</dbReference>
<dbReference type="GO" id="GO:0005506">
    <property type="term" value="F:iron ion binding"/>
    <property type="evidence" value="ECO:0007669"/>
    <property type="project" value="InterPro"/>
</dbReference>
<dbReference type="GO" id="GO:0016966">
    <property type="term" value="F:nitric oxide reductase activity"/>
    <property type="evidence" value="ECO:0007669"/>
    <property type="project" value="InterPro"/>
</dbReference>
<dbReference type="CDD" id="cd07709">
    <property type="entry name" value="flavodiiron_proteins_MBL-fold"/>
    <property type="match status" value="1"/>
</dbReference>
<dbReference type="CDD" id="cd00730">
    <property type="entry name" value="rubredoxin"/>
    <property type="match status" value="1"/>
</dbReference>
<dbReference type="FunFam" id="3.40.50.360:FF:000012">
    <property type="entry name" value="Anaerobic nitric oxide reductase flavorubredoxin"/>
    <property type="match status" value="1"/>
</dbReference>
<dbReference type="FunFam" id="3.60.15.10:FF:000009">
    <property type="entry name" value="Anaerobic nitric oxide reductase flavorubredoxin"/>
    <property type="match status" value="1"/>
</dbReference>
<dbReference type="Gene3D" id="2.20.28.10">
    <property type="match status" value="1"/>
</dbReference>
<dbReference type="Gene3D" id="3.40.50.360">
    <property type="match status" value="1"/>
</dbReference>
<dbReference type="Gene3D" id="3.60.15.10">
    <property type="entry name" value="Ribonuclease Z/Hydroxyacylglutathione hydrolase-like"/>
    <property type="match status" value="1"/>
</dbReference>
<dbReference type="HAMAP" id="MF_01312">
    <property type="entry name" value="NorV"/>
    <property type="match status" value="1"/>
</dbReference>
<dbReference type="InterPro" id="IPR023957">
    <property type="entry name" value="Anaer_NO_rdtase_flvorubredoxin"/>
</dbReference>
<dbReference type="InterPro" id="IPR008254">
    <property type="entry name" value="Flavodoxin/NO_synth"/>
</dbReference>
<dbReference type="InterPro" id="IPR029039">
    <property type="entry name" value="Flavoprotein-like_sf"/>
</dbReference>
<dbReference type="InterPro" id="IPR001279">
    <property type="entry name" value="Metallo-B-lactamas"/>
</dbReference>
<dbReference type="InterPro" id="IPR045761">
    <property type="entry name" value="ODP_dom"/>
</dbReference>
<dbReference type="InterPro" id="IPR036866">
    <property type="entry name" value="RibonucZ/Hydroxyglut_hydro"/>
</dbReference>
<dbReference type="InterPro" id="IPR024934">
    <property type="entry name" value="Rubredoxin-like_dom"/>
</dbReference>
<dbReference type="InterPro" id="IPR016440">
    <property type="entry name" value="Rubredoxin-O_OxRdtase"/>
</dbReference>
<dbReference type="InterPro" id="IPR024935">
    <property type="entry name" value="Rubredoxin_dom"/>
</dbReference>
<dbReference type="NCBIfam" id="NF003954">
    <property type="entry name" value="PRK05452.1"/>
    <property type="match status" value="1"/>
</dbReference>
<dbReference type="PANTHER" id="PTHR43717">
    <property type="entry name" value="ANAEROBIC NITRIC OXIDE REDUCTASE FLAVORUBREDOXIN"/>
    <property type="match status" value="1"/>
</dbReference>
<dbReference type="PANTHER" id="PTHR43717:SF1">
    <property type="entry name" value="ANAEROBIC NITRIC OXIDE REDUCTASE FLAVORUBREDOXIN"/>
    <property type="match status" value="1"/>
</dbReference>
<dbReference type="Pfam" id="PF00258">
    <property type="entry name" value="Flavodoxin_1"/>
    <property type="match status" value="1"/>
</dbReference>
<dbReference type="Pfam" id="PF19583">
    <property type="entry name" value="ODP"/>
    <property type="match status" value="1"/>
</dbReference>
<dbReference type="Pfam" id="PF00301">
    <property type="entry name" value="Rubredoxin"/>
    <property type="match status" value="1"/>
</dbReference>
<dbReference type="PIRSF" id="PIRSF005243">
    <property type="entry name" value="ROO"/>
    <property type="match status" value="1"/>
</dbReference>
<dbReference type="PRINTS" id="PR00163">
    <property type="entry name" value="RUBREDOXIN"/>
</dbReference>
<dbReference type="SMART" id="SM00849">
    <property type="entry name" value="Lactamase_B"/>
    <property type="match status" value="1"/>
</dbReference>
<dbReference type="SUPFAM" id="SSF52218">
    <property type="entry name" value="Flavoproteins"/>
    <property type="match status" value="1"/>
</dbReference>
<dbReference type="SUPFAM" id="SSF56281">
    <property type="entry name" value="Metallo-hydrolase/oxidoreductase"/>
    <property type="match status" value="1"/>
</dbReference>
<dbReference type="SUPFAM" id="SSF57802">
    <property type="entry name" value="Rubredoxin-like"/>
    <property type="match status" value="1"/>
</dbReference>
<dbReference type="PROSITE" id="PS50902">
    <property type="entry name" value="FLAVODOXIN_LIKE"/>
    <property type="match status" value="1"/>
</dbReference>
<dbReference type="PROSITE" id="PS50903">
    <property type="entry name" value="RUBREDOXIN_LIKE"/>
    <property type="match status" value="1"/>
</dbReference>
<protein>
    <recommendedName>
        <fullName evidence="1">Anaerobic nitric oxide reductase flavorubredoxin</fullName>
        <shortName evidence="1">FlRd</shortName>
        <shortName evidence="1">FlavoRb</shortName>
    </recommendedName>
</protein>